<gene>
    <name type="primary">JPH3</name>
    <name type="synonym">JP3</name>
    <name type="synonym">TNRC22</name>
</gene>
<sequence length="748" mass="81469">MSSGGRFNFDDGGSYCGGWEDGKAHGHGVCTGPKGQGEYTGSWSHGFEVLGVYTWPSGNTYQGTWAQGKRHGIGLESKGKWVYKGEWTHGFKGRYGVRECAGNGAKYEGTWSNGLQDGYGTETYSDGGTYQGQWVGGMRQGYGVRQSVPYGMAAVIRSPLRTSINSLRSEHTNGTALHPDASPAVAGSPAVSRGGFVLVAHSDSEILKSKKKGLFRRSLLSGLKLRKSESKSSLASQRSKQSSFRSEAGMSTVSSTASDIHSTISLGEAEAELAVIEDDIDATTTETYVGEWKNDKRSGFGVSQRSDGLKYEGEWASNRRHGYGCMTFPDGTKEEGKYKQNILVGGKRKNLIPLRASKIREKVDRAVEAAERAATIAKQKAEIAASRTSHSRAKAEAALTAAQKAQEEARIARITAKEFSPSFQHRENGLEYQRPKRQTSCDDIEVLSTGTPLQQESPELYRKGTTPSDLTPDDSPLQSFPTSPAATPPPAPAARNKVAHFSRQVSVDEERGGDIQMLLEGRAGDCARSSWGEEQAGGSRGVRSGALRGGLLVDDFRTRGSGRKQPGNPKPRERRTESPPVFTWTSHHRASNHSPGGSRLLELQEEKLSNYRMEMKPLLRMETHPQKRRYSKGGACRGLGDDHRPEDRGFGVQRLRSKAQNKENFRPASSAEPAVQKLASLRLGGAEPRLLRWDLTFSPPQKSLPVALESDEENGDELKSSTGSAPILVVMVILLNIGVAILFINFFI</sequence>
<protein>
    <recommendedName>
        <fullName>Junctophilin-3</fullName>
        <shortName>JP-3</shortName>
    </recommendedName>
    <alternativeName>
        <fullName>Junctophilin type 3</fullName>
    </alternativeName>
    <alternativeName>
        <fullName>Trinucleotide repeat-containing gene 22 protein</fullName>
    </alternativeName>
</protein>
<proteinExistence type="evidence at protein level"/>
<evidence type="ECO:0000250" key="1"/>
<evidence type="ECO:0000250" key="2">
    <source>
        <dbReference type="UniProtKB" id="Q9ET77"/>
    </source>
</evidence>
<evidence type="ECO:0000255" key="3"/>
<evidence type="ECO:0000256" key="4">
    <source>
        <dbReference type="SAM" id="MobiDB-lite"/>
    </source>
</evidence>
<evidence type="ECO:0000269" key="5">
    <source>
    </source>
</evidence>
<evidence type="ECO:0000269" key="6">
    <source>
    </source>
</evidence>
<evidence type="ECO:0000269" key="7">
    <source>
    </source>
</evidence>
<evidence type="ECO:0000269" key="8">
    <source>
    </source>
</evidence>
<evidence type="ECO:0000305" key="9"/>
<keyword id="KW-0025">Alternative splicing</keyword>
<keyword id="KW-1003">Cell membrane</keyword>
<keyword id="KW-0256">Endoplasmic reticulum</keyword>
<keyword id="KW-0472">Membrane</keyword>
<keyword id="KW-0597">Phosphoprotein</keyword>
<keyword id="KW-1267">Proteomics identification</keyword>
<keyword id="KW-1185">Reference proteome</keyword>
<keyword id="KW-0677">Repeat</keyword>
<keyword id="KW-0812">Transmembrane</keyword>
<keyword id="KW-1133">Transmembrane helix</keyword>
<keyword id="KW-0818">Triplet repeat expansion</keyword>
<feature type="chain" id="PRO_0000159850" description="Junctophilin-3">
    <location>
        <begin position="1"/>
        <end position="748"/>
    </location>
</feature>
<feature type="topological domain" description="Cytoplasmic" evidence="3">
    <location>
        <begin position="1"/>
        <end position="727"/>
    </location>
</feature>
<feature type="transmembrane region" description="Helical; Anchor for type IV membrane protein" evidence="3">
    <location>
        <begin position="728"/>
        <end position="748"/>
    </location>
</feature>
<feature type="repeat" description="MORN 1">
    <location>
        <begin position="15"/>
        <end position="37"/>
    </location>
</feature>
<feature type="repeat" description="MORN 2">
    <location>
        <begin position="39"/>
        <end position="60"/>
    </location>
</feature>
<feature type="repeat" description="MORN 3">
    <location>
        <begin position="61"/>
        <end position="82"/>
    </location>
</feature>
<feature type="repeat" description="MORN 4">
    <location>
        <begin position="83"/>
        <end position="105"/>
    </location>
</feature>
<feature type="repeat" description="MORN 5">
    <location>
        <begin position="107"/>
        <end position="129"/>
    </location>
</feature>
<feature type="repeat" description="MORN 6">
    <location>
        <begin position="130"/>
        <end position="152"/>
    </location>
</feature>
<feature type="repeat" description="MORN 7">
    <location>
        <begin position="288"/>
        <end position="310"/>
    </location>
</feature>
<feature type="repeat" description="MORN 8">
    <location>
        <begin position="311"/>
        <end position="333"/>
    </location>
</feature>
<feature type="region of interest" description="Disordered" evidence="4">
    <location>
        <begin position="230"/>
        <end position="259"/>
    </location>
</feature>
<feature type="region of interest" description="Disordered" evidence="4">
    <location>
        <begin position="416"/>
        <end position="496"/>
    </location>
</feature>
<feature type="region of interest" description="Disordered" evidence="4">
    <location>
        <begin position="526"/>
        <end position="597"/>
    </location>
</feature>
<feature type="region of interest" description="Disordered" evidence="4">
    <location>
        <begin position="624"/>
        <end position="649"/>
    </location>
</feature>
<feature type="compositionally biased region" description="Low complexity" evidence="4">
    <location>
        <begin position="231"/>
        <end position="244"/>
    </location>
</feature>
<feature type="compositionally biased region" description="Polar residues" evidence="4">
    <location>
        <begin position="249"/>
        <end position="259"/>
    </location>
</feature>
<feature type="compositionally biased region" description="Polar residues" evidence="4">
    <location>
        <begin position="448"/>
        <end position="457"/>
    </location>
</feature>
<feature type="compositionally biased region" description="Basic and acidic residues" evidence="4">
    <location>
        <begin position="639"/>
        <end position="649"/>
    </location>
</feature>
<feature type="modified residue" description="Phosphoserine" evidence="2">
    <location>
        <position position="440"/>
    </location>
</feature>
<feature type="modified residue" description="Phosphothreonine" evidence="2">
    <location>
        <position position="451"/>
    </location>
</feature>
<feature type="modified residue" description="Phosphoserine" evidence="2">
    <location>
        <position position="457"/>
    </location>
</feature>
<feature type="modified residue" description="Phosphothreonine" evidence="2">
    <location>
        <position position="471"/>
    </location>
</feature>
<feature type="modified residue" description="Phosphoserine" evidence="2">
    <location>
        <position position="475"/>
    </location>
</feature>
<feature type="modified residue" description="Phosphoserine" evidence="2">
    <location>
        <position position="506"/>
    </location>
</feature>
<feature type="modified residue" description="Phosphoserine" evidence="2">
    <location>
        <position position="703"/>
    </location>
</feature>
<feature type="modified residue" description="Phosphoserine" evidence="2">
    <location>
        <position position="710"/>
    </location>
</feature>
<feature type="splice variant" id="VSP_002787" description="In isoform 2." evidence="9">
    <original>GTYQGQWVGGMRQGYGVRQSVPYGMAAVIRSPLRTSINSLRSEHTNGTALHPDASPAVAGS</original>
    <variation>DATAFGAEPGPEARELPAAAAAAAAAAAAAAAVRWFLCREPWPALQLPACLDSPISTPQCT</variation>
    <location>
        <begin position="128"/>
        <end position="188"/>
    </location>
</feature>
<feature type="splice variant" id="VSP_002788" description="In isoform 2." evidence="9">
    <location>
        <begin position="189"/>
        <end position="748"/>
    </location>
</feature>
<feature type="sequence variant" id="VAR_032494" description="In dbSNP:rs17857118." evidence="8">
    <original>I</original>
    <variation>T</variation>
    <location>
        <position position="376"/>
    </location>
</feature>
<feature type="sequence variant" id="VAR_032495" description="In dbSNP:rs17853660." evidence="8">
    <original>P</original>
    <variation>T</variation>
    <location>
        <position position="472"/>
    </location>
</feature>
<feature type="sequence variant" id="VAR_032496" description="In dbSNP:rs17853661." evidence="8">
    <original>P</original>
    <variation>L</variation>
    <location>
        <position position="645"/>
    </location>
</feature>
<feature type="sequence conflict" description="In Ref. 1; BAB11983." evidence="9" ref="1">
    <original>A</original>
    <variation>P</variation>
    <location>
        <position position="176"/>
    </location>
</feature>
<feature type="sequence conflict" description="In Ref. 1; BAB11983." evidence="9" ref="1">
    <original>A</original>
    <variation>D</variation>
    <location>
        <position position="186"/>
    </location>
</feature>
<dbReference type="EMBL" id="AB042636">
    <property type="protein sequence ID" value="BAB11983.1"/>
    <property type="molecule type" value="mRNA"/>
</dbReference>
<dbReference type="EMBL" id="AB042640">
    <property type="protein sequence ID" value="BAB11987.1"/>
    <property type="molecule type" value="Genomic_DNA"/>
</dbReference>
<dbReference type="EMBL" id="CH471114">
    <property type="protein sequence ID" value="EAW95386.1"/>
    <property type="molecule type" value="Genomic_DNA"/>
</dbReference>
<dbReference type="EMBL" id="CH471114">
    <property type="protein sequence ID" value="EAW95387.1"/>
    <property type="molecule type" value="Genomic_DNA"/>
</dbReference>
<dbReference type="EMBL" id="BC036533">
    <property type="protein sequence ID" value="AAH36533.1"/>
    <property type="molecule type" value="mRNA"/>
</dbReference>
<dbReference type="EMBL" id="AF429315">
    <property type="protein sequence ID" value="AAL40941.1"/>
    <property type="molecule type" value="Genomic_DNA"/>
</dbReference>
<dbReference type="EMBL" id="BE042890">
    <property type="status" value="NOT_ANNOTATED_CDS"/>
    <property type="molecule type" value="mRNA"/>
</dbReference>
<dbReference type="CCDS" id="CCDS10962.1">
    <molecule id="Q8WXH2-1"/>
</dbReference>
<dbReference type="RefSeq" id="NP_065706.2">
    <molecule id="Q8WXH2-1"/>
    <property type="nucleotide sequence ID" value="NM_020655.3"/>
</dbReference>
<dbReference type="SMR" id="Q8WXH2"/>
<dbReference type="BioGRID" id="121492">
    <property type="interactions" value="55"/>
</dbReference>
<dbReference type="FunCoup" id="Q8WXH2">
    <property type="interactions" value="615"/>
</dbReference>
<dbReference type="IntAct" id="Q8WXH2">
    <property type="interactions" value="248"/>
</dbReference>
<dbReference type="MINT" id="Q8WXH2"/>
<dbReference type="STRING" id="9606.ENSP00000284262"/>
<dbReference type="TCDB" id="8.A.110.1.5">
    <property type="family name" value="the junctophilin (jp) family"/>
</dbReference>
<dbReference type="GlyGen" id="Q8WXH2">
    <property type="glycosylation" value="1 site"/>
</dbReference>
<dbReference type="iPTMnet" id="Q8WXH2"/>
<dbReference type="PhosphoSitePlus" id="Q8WXH2"/>
<dbReference type="BioMuta" id="JPH3"/>
<dbReference type="DMDM" id="27805485"/>
<dbReference type="jPOST" id="Q8WXH2"/>
<dbReference type="MassIVE" id="Q8WXH2"/>
<dbReference type="PaxDb" id="9606-ENSP00000284262"/>
<dbReference type="PeptideAtlas" id="Q8WXH2"/>
<dbReference type="ProteomicsDB" id="75053">
    <molecule id="Q8WXH2-1"/>
</dbReference>
<dbReference type="ProteomicsDB" id="75054">
    <molecule id="Q8WXH2-2"/>
</dbReference>
<dbReference type="Antibodypedia" id="17225">
    <property type="antibodies" value="180 antibodies from 25 providers"/>
</dbReference>
<dbReference type="DNASU" id="57338"/>
<dbReference type="Ensembl" id="ENST00000284262.3">
    <molecule id="Q8WXH2-1"/>
    <property type="protein sequence ID" value="ENSP00000284262.2"/>
    <property type="gene ID" value="ENSG00000154118.13"/>
</dbReference>
<dbReference type="GeneID" id="57338"/>
<dbReference type="KEGG" id="hsa:57338"/>
<dbReference type="MANE-Select" id="ENST00000284262.3">
    <property type="protein sequence ID" value="ENSP00000284262.2"/>
    <property type="RefSeq nucleotide sequence ID" value="NM_020655.4"/>
    <property type="RefSeq protein sequence ID" value="NP_065706.2"/>
</dbReference>
<dbReference type="UCSC" id="uc002fkd.5">
    <molecule id="Q8WXH2-1"/>
    <property type="organism name" value="human"/>
</dbReference>
<dbReference type="AGR" id="HGNC:14203"/>
<dbReference type="CTD" id="57338"/>
<dbReference type="DisGeNET" id="57338"/>
<dbReference type="GeneCards" id="JPH3"/>
<dbReference type="GeneReviews" id="JPH3"/>
<dbReference type="HGNC" id="HGNC:14203">
    <property type="gene designation" value="JPH3"/>
</dbReference>
<dbReference type="HPA" id="ENSG00000154118">
    <property type="expression patterns" value="Tissue enriched (brain)"/>
</dbReference>
<dbReference type="MalaCards" id="JPH3"/>
<dbReference type="MIM" id="605268">
    <property type="type" value="gene"/>
</dbReference>
<dbReference type="MIM" id="606438">
    <property type="type" value="phenotype"/>
</dbReference>
<dbReference type="neXtProt" id="NX_Q8WXH2"/>
<dbReference type="OpenTargets" id="ENSG00000154118"/>
<dbReference type="Orphanet" id="98934">
    <property type="disease" value="Huntington disease-like 2"/>
</dbReference>
<dbReference type="PharmGKB" id="PA30000"/>
<dbReference type="VEuPathDB" id="HostDB:ENSG00000154118"/>
<dbReference type="eggNOG" id="KOG0231">
    <property type="taxonomic scope" value="Eukaryota"/>
</dbReference>
<dbReference type="GeneTree" id="ENSGT00940000158707"/>
<dbReference type="HOGENOM" id="CLU_008078_2_0_1"/>
<dbReference type="InParanoid" id="Q8WXH2"/>
<dbReference type="OMA" id="RHYSKAG"/>
<dbReference type="OrthoDB" id="284854at2759"/>
<dbReference type="PAN-GO" id="Q8WXH2">
    <property type="GO annotations" value="4 GO annotations based on evolutionary models"/>
</dbReference>
<dbReference type="PhylomeDB" id="Q8WXH2"/>
<dbReference type="TreeFam" id="TF317210"/>
<dbReference type="PathwayCommons" id="Q8WXH2"/>
<dbReference type="SignaLink" id="Q8WXH2"/>
<dbReference type="BioGRID-ORCS" id="57338">
    <property type="hits" value="11 hits in 1145 CRISPR screens"/>
</dbReference>
<dbReference type="ChiTaRS" id="JPH3">
    <property type="organism name" value="human"/>
</dbReference>
<dbReference type="GeneWiki" id="JPH3"/>
<dbReference type="GenomeRNAi" id="57338"/>
<dbReference type="Pharos" id="Q8WXH2">
    <property type="development level" value="Tbio"/>
</dbReference>
<dbReference type="PRO" id="PR:Q8WXH2"/>
<dbReference type="Proteomes" id="UP000005640">
    <property type="component" value="Chromosome 16"/>
</dbReference>
<dbReference type="RNAct" id="Q8WXH2">
    <property type="molecule type" value="protein"/>
</dbReference>
<dbReference type="Bgee" id="ENSG00000154118">
    <property type="expression patterns" value="Expressed in right frontal lobe and 119 other cell types or tissues"/>
</dbReference>
<dbReference type="GO" id="GO:0005789">
    <property type="term" value="C:endoplasmic reticulum membrane"/>
    <property type="evidence" value="ECO:0000318"/>
    <property type="project" value="GO_Central"/>
</dbReference>
<dbReference type="GO" id="GO:0030314">
    <property type="term" value="C:junctional membrane complex"/>
    <property type="evidence" value="ECO:0000318"/>
    <property type="project" value="GO_Central"/>
</dbReference>
<dbReference type="GO" id="GO:0014701">
    <property type="term" value="C:junctional sarcoplasmic reticulum membrane"/>
    <property type="evidence" value="ECO:0000304"/>
    <property type="project" value="BHF-UCL"/>
</dbReference>
<dbReference type="GO" id="GO:0016020">
    <property type="term" value="C:membrane"/>
    <property type="evidence" value="ECO:0000303"/>
    <property type="project" value="UniProtKB"/>
</dbReference>
<dbReference type="GO" id="GO:0005886">
    <property type="term" value="C:plasma membrane"/>
    <property type="evidence" value="ECO:0000318"/>
    <property type="project" value="GO_Central"/>
</dbReference>
<dbReference type="GO" id="GO:0060402">
    <property type="term" value="P:calcium ion transport into cytosol"/>
    <property type="evidence" value="ECO:0000304"/>
    <property type="project" value="BHF-UCL"/>
</dbReference>
<dbReference type="GO" id="GO:0035640">
    <property type="term" value="P:exploration behavior"/>
    <property type="evidence" value="ECO:0007669"/>
    <property type="project" value="Ensembl"/>
</dbReference>
<dbReference type="GO" id="GO:0007612">
    <property type="term" value="P:learning"/>
    <property type="evidence" value="ECO:0007669"/>
    <property type="project" value="Ensembl"/>
</dbReference>
<dbReference type="GO" id="GO:0040011">
    <property type="term" value="P:locomotion"/>
    <property type="evidence" value="ECO:0007669"/>
    <property type="project" value="Ensembl"/>
</dbReference>
<dbReference type="GO" id="GO:0007613">
    <property type="term" value="P:memory"/>
    <property type="evidence" value="ECO:0007669"/>
    <property type="project" value="Ensembl"/>
</dbReference>
<dbReference type="GO" id="GO:0050885">
    <property type="term" value="P:neuromuscular process controlling balance"/>
    <property type="evidence" value="ECO:0007669"/>
    <property type="project" value="Ensembl"/>
</dbReference>
<dbReference type="GO" id="GO:0010882">
    <property type="term" value="P:regulation of cardiac muscle contraction by calcium ion signaling"/>
    <property type="evidence" value="ECO:0000304"/>
    <property type="project" value="BHF-UCL"/>
</dbReference>
<dbReference type="GO" id="GO:0048168">
    <property type="term" value="P:regulation of neuronal synaptic plasticity"/>
    <property type="evidence" value="ECO:0007669"/>
    <property type="project" value="Ensembl"/>
</dbReference>
<dbReference type="GO" id="GO:0010880">
    <property type="term" value="P:regulation of release of sequestered calcium ion into cytosol by sarcoplasmic reticulum"/>
    <property type="evidence" value="ECO:0000304"/>
    <property type="project" value="BHF-UCL"/>
</dbReference>
<dbReference type="GO" id="GO:0048167">
    <property type="term" value="P:regulation of synaptic plasticity"/>
    <property type="evidence" value="ECO:0000318"/>
    <property type="project" value="GO_Central"/>
</dbReference>
<dbReference type="FunFam" id="2.20.110.10:FF:000001">
    <property type="entry name" value="Junctophilin"/>
    <property type="match status" value="1"/>
</dbReference>
<dbReference type="FunFam" id="2.20.110.10:FF:000003">
    <property type="entry name" value="Junctophilin"/>
    <property type="match status" value="1"/>
</dbReference>
<dbReference type="FunFam" id="2.20.110.10:FF:000012">
    <property type="entry name" value="Junctophilin"/>
    <property type="match status" value="1"/>
</dbReference>
<dbReference type="Gene3D" id="2.20.110.10">
    <property type="entry name" value="Histone H3 K4-specific methyltransferase SET7/9 N-terminal domain"/>
    <property type="match status" value="3"/>
</dbReference>
<dbReference type="InterPro" id="IPR017191">
    <property type="entry name" value="Junctophilin"/>
</dbReference>
<dbReference type="InterPro" id="IPR003409">
    <property type="entry name" value="MORN"/>
</dbReference>
<dbReference type="PANTHER" id="PTHR23085">
    <property type="entry name" value="GH28348P"/>
    <property type="match status" value="1"/>
</dbReference>
<dbReference type="PANTHER" id="PTHR23085:SF7">
    <property type="entry name" value="JUNCTOPHILIN-3"/>
    <property type="match status" value="1"/>
</dbReference>
<dbReference type="Pfam" id="PF02493">
    <property type="entry name" value="MORN"/>
    <property type="match status" value="8"/>
</dbReference>
<dbReference type="PIRSF" id="PIRSF037387">
    <property type="entry name" value="Junctophilin"/>
    <property type="match status" value="1"/>
</dbReference>
<dbReference type="SMART" id="SM00698">
    <property type="entry name" value="MORN"/>
    <property type="match status" value="7"/>
</dbReference>
<dbReference type="SUPFAM" id="SSF82185">
    <property type="entry name" value="Histone H3 K4-specific methyltransferase SET7/9 N-terminal domain"/>
    <property type="match status" value="2"/>
</dbReference>
<reference key="1">
    <citation type="journal article" date="2000" name="Biochem. Biophys. Res. Commun.">
        <title>Characterization of human junctophilin subtype genes.</title>
        <authorList>
            <person name="Nishi M."/>
            <person name="Mizushima A."/>
            <person name="Nakagawara K."/>
            <person name="Takeshima H."/>
        </authorList>
    </citation>
    <scope>NUCLEOTIDE SEQUENCE [GENOMIC DNA / MRNA] (ISOFORM 1)</scope>
    <scope>TISSUE SPECIFICITY</scope>
    <source>
        <tissue>Brain</tissue>
    </source>
</reference>
<reference key="2">
    <citation type="submission" date="2005-09" db="EMBL/GenBank/DDBJ databases">
        <authorList>
            <person name="Mural R.J."/>
            <person name="Istrail S."/>
            <person name="Sutton G.G."/>
            <person name="Florea L."/>
            <person name="Halpern A.L."/>
            <person name="Mobarry C.M."/>
            <person name="Lippert R."/>
            <person name="Walenz B."/>
            <person name="Shatkay H."/>
            <person name="Dew I."/>
            <person name="Miller J.R."/>
            <person name="Flanigan M.J."/>
            <person name="Edwards N.J."/>
            <person name="Bolanos R."/>
            <person name="Fasulo D."/>
            <person name="Halldorsson B.V."/>
            <person name="Hannenhalli S."/>
            <person name="Turner R."/>
            <person name="Yooseph S."/>
            <person name="Lu F."/>
            <person name="Nusskern D.R."/>
            <person name="Shue B.C."/>
            <person name="Zheng X.H."/>
            <person name="Zhong F."/>
            <person name="Delcher A.L."/>
            <person name="Huson D.H."/>
            <person name="Kravitz S.A."/>
            <person name="Mouchard L."/>
            <person name="Reinert K."/>
            <person name="Remington K.A."/>
            <person name="Clark A.G."/>
            <person name="Waterman M.S."/>
            <person name="Eichler E.E."/>
            <person name="Adams M.D."/>
            <person name="Hunkapiller M.W."/>
            <person name="Myers E.W."/>
            <person name="Venter J.C."/>
        </authorList>
    </citation>
    <scope>NUCLEOTIDE SEQUENCE [LARGE SCALE GENOMIC DNA]</scope>
</reference>
<reference key="3">
    <citation type="journal article" date="2004" name="Genome Res.">
        <title>The status, quality, and expansion of the NIH full-length cDNA project: the Mammalian Gene Collection (MGC).</title>
        <authorList>
            <consortium name="The MGC Project Team"/>
        </authorList>
    </citation>
    <scope>NUCLEOTIDE SEQUENCE [LARGE SCALE MRNA] (ISOFORM 1)</scope>
    <scope>VARIANTS THR-376; THR-472 AND LEU-645</scope>
    <source>
        <tissue>Brain</tissue>
    </source>
</reference>
<reference key="4">
    <citation type="journal article" date="2001" name="Nat. Genet.">
        <title>A repeat expansion in the gene encoding junctophilin-3 is associated with Huntington disease-like 2.</title>
        <authorList>
            <person name="Holmes S.E."/>
            <person name="O'Hearn E."/>
            <person name="Rosenblatt A."/>
            <person name="Callahan C."/>
            <person name="Hwang H.S."/>
            <person name="Ingersoll-Ashworth R.G."/>
            <person name="Fleisher A."/>
            <person name="Stevanin G."/>
            <person name="Brice A."/>
            <person name="Potter N.T."/>
            <person name="Ross C.A."/>
            <person name="Margolis R.L."/>
        </authorList>
    </citation>
    <scope>NUCLEOTIDE SEQUENCE [GENOMIC DNA] OF 1-127</scope>
    <scope>IDENTIFICATION (ISOFORM 2)</scope>
    <scope>POLYMORPHISM OF POLY-ALA REGION (ISOFORM 2)</scope>
</reference>
<reference key="5">
    <citation type="journal article" date="2002" name="Neurology">
        <title>CAG/CTG repeat expansions at the Huntington's disease-like 2 locus are rare in Huntington's disease patients.</title>
        <authorList>
            <person name="Stevanin G."/>
            <person name="Camuzat A."/>
            <person name="Holmes S.E."/>
            <person name="Julien C."/>
            <person name="Sahloul R."/>
            <person name="Dode C."/>
            <person name="Hahn-Barma V."/>
            <person name="Ross C.A."/>
            <person name="Margolis R.L."/>
            <person name="Durr A."/>
            <person name="Brice A."/>
        </authorList>
    </citation>
    <scope>INVOLVEMENT IN HDL2</scope>
</reference>
<reference key="6">
    <citation type="journal article" date="2003" name="Neurology">
        <title>Huntington's disease-like 2 can present as chorea-acanthocytosis.</title>
        <authorList>
            <person name="Walker R.H."/>
            <person name="Rasmussen A."/>
            <person name="Rudnicki D."/>
            <person name="Holmes S.E."/>
            <person name="Alonso E."/>
            <person name="Matsuura T."/>
            <person name="Ashizawa T."/>
            <person name="Davidoff-Feldman B."/>
            <person name="Margolis R.L."/>
        </authorList>
    </citation>
    <scope>INVOLVEMENT IN HDL2</scope>
</reference>
<comment type="function">
    <text>Junctophilins contribute to the formation of junctional membrane complexes (JMCs) which link the plasma membrane with the endoplasmic or sarcoplasmic reticulum in excitable cells. Provides a structural foundation for functional cross-talk between the cell surface and intracellular calcium release channels. JPH3 is brain-specific and appears to have an active role in certain neurons involved in motor coordination and memory.</text>
</comment>
<comment type="interaction">
    <interactant intactId="EBI-1055254">
        <id>Q8WXH2</id>
    </interactant>
    <interactant intactId="EBI-11096309">
        <id>Q9NYB9-2</id>
        <label>ABI2</label>
    </interactant>
    <organismsDiffer>false</organismsDiffer>
    <experiments>3</experiments>
</comment>
<comment type="interaction">
    <interactant intactId="EBI-1055254">
        <id>Q8WXH2</id>
    </interactant>
    <interactant intactId="EBI-16436655">
        <id>Q6H8Q1-8</id>
        <label>ABLIM2</label>
    </interactant>
    <organismsDiffer>false</organismsDiffer>
    <experiments>3</experiments>
</comment>
<comment type="interaction">
    <interactant intactId="EBI-1055254">
        <id>Q8WXH2</id>
    </interactant>
    <interactant intactId="EBI-3916527">
        <id>Q9UIJ7</id>
        <label>AK3</label>
    </interactant>
    <organismsDiffer>false</organismsDiffer>
    <experiments>3</experiments>
</comment>
<comment type="interaction">
    <interactant intactId="EBI-1055254">
        <id>Q8WXH2</id>
    </interactant>
    <interactant intactId="EBI-752170">
        <id>P00352</id>
        <label>ALDH1A1</label>
    </interactant>
    <organismsDiffer>false</organismsDiffer>
    <experiments>3</experiments>
</comment>
<comment type="interaction">
    <interactant intactId="EBI-1055254">
        <id>Q8WXH2</id>
    </interactant>
    <interactant intactId="EBI-12304341">
        <id>Q6PG48</id>
        <label>ANKRD12</label>
    </interactant>
    <organismsDiffer>false</organismsDiffer>
    <experiments>3</experiments>
</comment>
<comment type="interaction">
    <interactant intactId="EBI-1055254">
        <id>Q8WXH2</id>
    </interactant>
    <interactant intactId="EBI-25840993">
        <id>Q6ZTN6-2</id>
        <label>ANKRD13D</label>
    </interactant>
    <organismsDiffer>false</organismsDiffer>
    <experiments>3</experiments>
</comment>
<comment type="interaction">
    <interactant intactId="EBI-1055254">
        <id>Q8WXH2</id>
    </interactant>
    <interactant intactId="EBI-11529439">
        <id>P63010-2</id>
        <label>AP2B1</label>
    </interactant>
    <organismsDiffer>false</organismsDiffer>
    <experiments>3</experiments>
</comment>
<comment type="interaction">
    <interactant intactId="EBI-1055254">
        <id>Q8WXH2</id>
    </interactant>
    <interactant intactId="EBI-14199987">
        <id>Q9Y575-3</id>
        <label>ASB3</label>
    </interactant>
    <organismsDiffer>false</organismsDiffer>
    <experiments>3</experiments>
</comment>
<comment type="interaction">
    <interactant intactId="EBI-1055254">
        <id>Q8WXH2</id>
    </interactant>
    <interactant intactId="EBI-745641">
        <id>Q96DX5</id>
        <label>ASB9</label>
    </interactant>
    <organismsDiffer>false</organismsDiffer>
    <experiments>3</experiments>
</comment>
<comment type="interaction">
    <interactant intactId="EBI-1055254">
        <id>Q8WXH2</id>
    </interactant>
    <interactant intactId="EBI-25843552">
        <id>Q96DX5-3</id>
        <label>ASB9</label>
    </interactant>
    <organismsDiffer>false</organismsDiffer>
    <experiments>3</experiments>
</comment>
<comment type="interaction">
    <interactant intactId="EBI-1055254">
        <id>Q8WXH2</id>
    </interactant>
    <interactant intactId="EBI-2410266">
        <id>Q8WXF7</id>
        <label>ATL1</label>
    </interactant>
    <organismsDiffer>false</organismsDiffer>
    <experiments>3</experiments>
</comment>
<comment type="interaction">
    <interactant intactId="EBI-1055254">
        <id>Q8WXH2</id>
    </interactant>
    <interactant intactId="EBI-4290814">
        <id>P21281</id>
        <label>ATP6V1B2</label>
    </interactant>
    <organismsDiffer>false</organismsDiffer>
    <experiments>3</experiments>
</comment>
<comment type="interaction">
    <interactant intactId="EBI-1055254">
        <id>Q8WXH2</id>
    </interactant>
    <interactant intactId="EBI-9092016">
        <id>Q9UQB8-6</id>
        <label>BAIAP2</label>
    </interactant>
    <organismsDiffer>false</organismsDiffer>
    <experiments>3</experiments>
</comment>
<comment type="interaction">
    <interactant intactId="EBI-1055254">
        <id>Q8WXH2</id>
    </interactant>
    <interactant intactId="EBI-519866">
        <id>Q16611</id>
        <label>BAK1</label>
    </interactant>
    <organismsDiffer>false</organismsDiffer>
    <experiments>3</experiments>
</comment>
<comment type="interaction">
    <interactant intactId="EBI-1055254">
        <id>Q8WXH2</id>
    </interactant>
    <interactant intactId="EBI-1050106">
        <id>O75934</id>
        <label>BCAS2</label>
    </interactant>
    <organismsDiffer>false</organismsDiffer>
    <experiments>3</experiments>
</comment>
<comment type="interaction">
    <interactant intactId="EBI-1055254">
        <id>Q8WXH2</id>
    </interactant>
    <interactant intactId="EBI-762076">
        <id>P21810</id>
        <label>BGN</label>
    </interactant>
    <organismsDiffer>false</organismsDiffer>
    <experiments>3</experiments>
</comment>
<comment type="interaction">
    <interactant intactId="EBI-1055254">
        <id>Q8WXH2</id>
    </interactant>
    <interactant intactId="EBI-514538">
        <id>Q13490</id>
        <label>BIRC2</label>
    </interactant>
    <organismsDiffer>false</organismsDiffer>
    <experiments>3</experiments>
</comment>
<comment type="interaction">
    <interactant intactId="EBI-1055254">
        <id>Q8WXH2</id>
    </interactant>
    <interactant intactId="EBI-2837444">
        <id>Q8WUW1</id>
        <label>BRK1</label>
    </interactant>
    <organismsDiffer>false</organismsDiffer>
    <experiments>3</experiments>
</comment>
<comment type="interaction">
    <interactant intactId="EBI-1055254">
        <id>Q8WXH2</id>
    </interactant>
    <interactant intactId="EBI-307461">
        <id>Q9Y297</id>
        <label>BTRC</label>
    </interactant>
    <organismsDiffer>false</organismsDiffer>
    <experiments>3</experiments>
</comment>
<comment type="interaction">
    <interactant intactId="EBI-1055254">
        <id>Q8WXH2</id>
    </interactant>
    <interactant intactId="EBI-9088162">
        <id>Q9NUB4</id>
        <label>C20orf141</label>
    </interactant>
    <organismsDiffer>false</organismsDiffer>
    <experiments>3</experiments>
</comment>
<comment type="interaction">
    <interactant intactId="EBI-1055254">
        <id>Q8WXH2</id>
    </interactant>
    <interactant intactId="EBI-10697767">
        <id>Q5SZD1</id>
        <label>C6orf141</label>
    </interactant>
    <organismsDiffer>false</organismsDiffer>
    <experiments>3</experiments>
</comment>
<comment type="interaction">
    <interactant intactId="EBI-1055254">
        <id>Q8WXH2</id>
    </interactant>
    <interactant intactId="EBI-397435">
        <id>P62158</id>
        <label>CALM3</label>
    </interactant>
    <organismsDiffer>false</organismsDiffer>
    <experiments>3</experiments>
</comment>
<comment type="interaction">
    <interactant intactId="EBI-1055254">
        <id>Q8WXH2</id>
    </interactant>
    <interactant intactId="EBI-10181422">
        <id>A0A1B0GWI1</id>
        <label>CCDC196</label>
    </interactant>
    <organismsDiffer>false</organismsDiffer>
    <experiments>3</experiments>
</comment>
<comment type="interaction">
    <interactant intactId="EBI-1055254">
        <id>Q8WXH2</id>
    </interactant>
    <interactant intactId="EBI-953695">
        <id>O00585</id>
        <label>CCL21</label>
    </interactant>
    <organismsDiffer>false</organismsDiffer>
    <experiments>3</experiments>
</comment>
<comment type="interaction">
    <interactant intactId="EBI-1055254">
        <id>Q8WXH2</id>
    </interactant>
    <interactant intactId="EBI-2836704">
        <id>P29017</id>
        <label>CD1C</label>
    </interactant>
    <organismsDiffer>false</organismsDiffer>
    <experiments>3</experiments>
</comment>
<comment type="interaction">
    <interactant intactId="EBI-1055254">
        <id>Q8WXH2</id>
    </interactant>
    <interactant intactId="EBI-396137">
        <id>Q9UJX2</id>
        <label>CDC23</label>
    </interactant>
    <organismsDiffer>false</organismsDiffer>
    <experiments>3</experiments>
</comment>
<comment type="interaction">
    <interactant intactId="EBI-1055254">
        <id>Q8WXH2</id>
    </interactant>
    <interactant intactId="EBI-1210604">
        <id>Q7Z7K6</id>
        <label>CENPV</label>
    </interactant>
    <organismsDiffer>false</organismsDiffer>
    <experiments>3</experiments>
</comment>
<comment type="interaction">
    <interactant intactId="EBI-1055254">
        <id>Q8WXH2</id>
    </interactant>
    <interactant intactId="EBI-6660184">
        <id>Q3SX64</id>
        <label>CIMAP1D</label>
    </interactant>
    <organismsDiffer>false</organismsDiffer>
    <experiments>3</experiments>
</comment>
<comment type="interaction">
    <interactant intactId="EBI-1055254">
        <id>Q8WXH2</id>
    </interactant>
    <interactant intactId="EBI-1050662">
        <id>P12532</id>
        <label>CKMT1B</label>
    </interactant>
    <organismsDiffer>false</organismsDiffer>
    <experiments>3</experiments>
</comment>
<comment type="interaction">
    <interactant intactId="EBI-1055254">
        <id>Q8WXH2</id>
    </interactant>
    <interactant intactId="EBI-1056029">
        <id>Q16740</id>
        <label>CLPP</label>
    </interactant>
    <organismsDiffer>false</organismsDiffer>
    <experiments>3</experiments>
</comment>
<comment type="interaction">
    <interactant intactId="EBI-1055254">
        <id>Q8WXH2</id>
    </interactant>
    <interactant intactId="EBI-21536433">
        <id>Q96HD1-2</id>
        <label>CRELD1</label>
    </interactant>
    <organismsDiffer>false</organismsDiffer>
    <experiments>3</experiments>
</comment>
<comment type="interaction">
    <interactant intactId="EBI-1055254">
        <id>Q8WXH2</id>
    </interactant>
    <interactant intactId="EBI-2872414">
        <id>Q8IUI8</id>
        <label>CRLF3</label>
    </interactant>
    <organismsDiffer>false</organismsDiffer>
    <experiments>3</experiments>
</comment>
<comment type="interaction">
    <interactant intactId="EBI-1055254">
        <id>Q8WXH2</id>
    </interactant>
    <interactant intactId="EBI-491549">
        <id>P35222</id>
        <label>CTNNB1</label>
    </interactant>
    <organismsDiffer>false</organismsDiffer>
    <experiments>3</experiments>
</comment>
<comment type="interaction">
    <interactant intactId="EBI-1055254">
        <id>Q8WXH2</id>
    </interactant>
    <interactant intactId="EBI-5453285">
        <id>Q2TBE0</id>
        <label>CWF19L2</label>
    </interactant>
    <organismsDiffer>false</organismsDiffer>
    <experiments>3</experiments>
</comment>
<comment type="interaction">
    <interactant intactId="EBI-1055254">
        <id>Q8WXH2</id>
    </interactant>
    <interactant intactId="EBI-25928065">
        <id>Q9NR63</id>
        <label>CYP26B1</label>
    </interactant>
    <organismsDiffer>false</organismsDiffer>
    <experiments>3</experiments>
</comment>
<comment type="interaction">
    <interactant intactId="EBI-1055254">
        <id>Q8WXH2</id>
    </interactant>
    <interactant intactId="EBI-25842815">
        <id>Q5TAQ9-2</id>
        <label>DCAF8</label>
    </interactant>
    <organismsDiffer>false</organismsDiffer>
    <experiments>3</experiments>
</comment>
<comment type="interaction">
    <interactant intactId="EBI-1055254">
        <id>Q8WXH2</id>
    </interactant>
    <interactant intactId="EBI-742651">
        <id>P35638</id>
        <label>DDIT3</label>
    </interactant>
    <organismsDiffer>false</organismsDiffer>
    <experiments>3</experiments>
</comment>
<comment type="interaction">
    <interactant intactId="EBI-1055254">
        <id>Q8WXH2</id>
    </interactant>
    <interactant intactId="EBI-1055572">
        <id>P17661</id>
        <label>DES</label>
    </interactant>
    <organismsDiffer>false</organismsDiffer>
    <experiments>3</experiments>
</comment>
<comment type="interaction">
    <interactant intactId="EBI-1055254">
        <id>Q8WXH2</id>
    </interactant>
    <interactant intactId="EBI-25927172">
        <id>Q6I9W9</id>
        <label>DKFZP586N0721</label>
    </interactant>
    <organismsDiffer>false</organismsDiffer>
    <experiments>3</experiments>
</comment>
<comment type="interaction">
    <interactant intactId="EBI-1055254">
        <id>Q8WXH2</id>
    </interactant>
    <interactant intactId="EBI-11526226">
        <id>Q96EY1-3</id>
        <label>DNAJA3</label>
    </interactant>
    <organismsDiffer>false</organismsDiffer>
    <experiments>3</experiments>
</comment>
<comment type="interaction">
    <interactant intactId="EBI-1055254">
        <id>Q8WXH2</id>
    </interactant>
    <interactant intactId="EBI-750565">
        <id>P55039</id>
        <label>DRG2</label>
    </interactant>
    <organismsDiffer>false</organismsDiffer>
    <experiments>3</experiments>
</comment>
<comment type="interaction">
    <interactant intactId="EBI-1055254">
        <id>Q8WXH2</id>
    </interactant>
    <interactant intactId="EBI-10698945">
        <id>Q8NEJ0</id>
        <label>DUSP18</label>
    </interactant>
    <organismsDiffer>false</organismsDiffer>
    <experiments>3</experiments>
</comment>
<comment type="interaction">
    <interactant intactId="EBI-1055254">
        <id>Q8WXH2</id>
    </interactant>
    <interactant intactId="EBI-739789">
        <id>Q92997</id>
        <label>DVL3</label>
    </interactant>
    <organismsDiffer>false</organismsDiffer>
    <experiments>3</experiments>
</comment>
<comment type="interaction">
    <interactant intactId="EBI-1055254">
        <id>Q8WXH2</id>
    </interactant>
    <interactant intactId="EBI-11132357">
        <id>O75530-2</id>
        <label>EED</label>
    </interactant>
    <organismsDiffer>false</organismsDiffer>
    <experiments>3</experiments>
</comment>
<comment type="interaction">
    <interactant intactId="EBI-1055254">
        <id>Q8WXH2</id>
    </interactant>
    <interactant intactId="EBI-3924130">
        <id>Q99944</id>
        <label>EGFL8</label>
    </interactant>
    <organismsDiffer>false</organismsDiffer>
    <experiments>3</experiments>
</comment>
<comment type="interaction">
    <interactant intactId="EBI-1055254">
        <id>Q8WXH2</id>
    </interactant>
    <interactant intactId="EBI-711990">
        <id>O00303</id>
        <label>EIF3F</label>
    </interactant>
    <organismsDiffer>false</organismsDiffer>
    <experiments>3</experiments>
</comment>
<comment type="interaction">
    <interactant intactId="EBI-1055254">
        <id>Q8WXH2</id>
    </interactant>
    <interactant intactId="EBI-12920100">
        <id>Q6UXG2-3</id>
        <label>ELAPOR1</label>
    </interactant>
    <organismsDiffer>false</organismsDiffer>
    <experiments>3</experiments>
</comment>
<comment type="interaction">
    <interactant intactId="EBI-1055254">
        <id>Q8WXH2</id>
    </interactant>
    <interactant intactId="EBI-25838727">
        <id>P29323-3</id>
        <label>EPHB2</label>
    </interactant>
    <organismsDiffer>false</organismsDiffer>
    <experiments>3</experiments>
</comment>
<comment type="interaction">
    <interactant intactId="EBI-1055254">
        <id>Q8WXH2</id>
    </interactant>
    <interactant intactId="EBI-16466949">
        <id>Q13216-2</id>
        <label>ERCC8</label>
    </interactant>
    <organismsDiffer>false</organismsDiffer>
    <experiments>3</experiments>
</comment>
<comment type="interaction">
    <interactant intactId="EBI-1055254">
        <id>Q8WXH2</id>
    </interactant>
    <interactant intactId="EBI-3928124">
        <id>Q96DF8</id>
        <label>ESS2</label>
    </interactant>
    <organismsDiffer>false</organismsDiffer>
    <experiments>3</experiments>
</comment>
<comment type="interaction">
    <interactant intactId="EBI-1055254">
        <id>Q8WXH2</id>
    </interactant>
    <interactant intactId="EBI-12292149">
        <id>Q6IPR1</id>
        <label>ETFRF1</label>
    </interactant>
    <organismsDiffer>false</organismsDiffer>
    <experiments>3</experiments>
</comment>
<comment type="interaction">
    <interactant intactId="EBI-1055254">
        <id>Q8WXH2</id>
    </interactant>
    <interactant intactId="EBI-21506125">
        <id>Q9UBQ6</id>
        <label>EXTL2</label>
    </interactant>
    <organismsDiffer>false</organismsDiffer>
    <experiments>3</experiments>
</comment>
<comment type="interaction">
    <interactant intactId="EBI-1055254">
        <id>Q8WXH2</id>
    </interactant>
    <interactant intactId="EBI-81610">
        <id>O15287</id>
        <label>FANCG</label>
    </interactant>
    <organismsDiffer>false</organismsDiffer>
    <experiments>3</experiments>
</comment>
<comment type="interaction">
    <interactant intactId="EBI-1055254">
        <id>Q8WXH2</id>
    </interactant>
    <interactant intactId="EBI-3957005">
        <id>Q53R41</id>
        <label>FASTKD1</label>
    </interactant>
    <organismsDiffer>false</organismsDiffer>
    <experiments>3</experiments>
</comment>
<comment type="interaction">
    <interactant intactId="EBI-1055254">
        <id>Q8WXH2</id>
    </interactant>
    <interactant intactId="EBI-6660598">
        <id>Q8NCQ5</id>
        <label>FBXO15</label>
    </interactant>
    <organismsDiffer>false</organismsDiffer>
    <experiments>3</experiments>
</comment>
<comment type="interaction">
    <interactant intactId="EBI-1055254">
        <id>Q8WXH2</id>
    </interactant>
    <interactant intactId="EBI-10691738">
        <id>P06241-3</id>
        <label>FYN</label>
    </interactant>
    <organismsDiffer>false</organismsDiffer>
    <experiments>3</experiments>
</comment>
<comment type="interaction">
    <interactant intactId="EBI-1055254">
        <id>Q8WXH2</id>
    </interactant>
    <interactant intactId="EBI-744302">
        <id>P14136</id>
        <label>GFAP</label>
    </interactant>
    <organismsDiffer>false</organismsDiffer>
    <experiments>3</experiments>
</comment>
<comment type="interaction">
    <interactant intactId="EBI-1055254">
        <id>Q8WXH2</id>
    </interactant>
    <interactant intactId="EBI-12108696">
        <id>Q9UJY5-4</id>
        <label>GGA1</label>
    </interactant>
    <organismsDiffer>false</organismsDiffer>
    <experiments>3</experiments>
</comment>
<comment type="interaction">
    <interactant intactId="EBI-1055254">
        <id>Q8WXH2</id>
    </interactant>
    <interactant intactId="EBI-750433">
        <id>P36382</id>
        <label>GJA5</label>
    </interactant>
    <organismsDiffer>false</organismsDiffer>
    <experiments>3</experiments>
</comment>
<comment type="interaction">
    <interactant intactId="EBI-1055254">
        <id>Q8WXH2</id>
    </interactant>
    <interactant intactId="EBI-745707">
        <id>Q8NEA9</id>
        <label>GMCL2</label>
    </interactant>
    <organismsDiffer>false</organismsDiffer>
    <experiments>3</experiments>
</comment>
<comment type="interaction">
    <interactant intactId="EBI-1055254">
        <id>Q8WXH2</id>
    </interactant>
    <interactant intactId="EBI-12353035">
        <id>Q13322-4</id>
        <label>GRB10</label>
    </interactant>
    <organismsDiffer>false</organismsDiffer>
    <experiments>3</experiments>
</comment>
<comment type="interaction">
    <interactant intactId="EBI-1055254">
        <id>Q8WXH2</id>
    </interactant>
    <interactant intactId="EBI-750650">
        <id>Q71DI3</id>
        <label>H3C15</label>
    </interactant>
    <organismsDiffer>false</organismsDiffer>
    <experiments>3</experiments>
</comment>
<comment type="interaction">
    <interactant intactId="EBI-1055254">
        <id>Q8WXH2</id>
    </interactant>
    <interactant intactId="EBI-25858908">
        <id>Q8N7T0</id>
        <label>hCG_1820408</label>
    </interactant>
    <organismsDiffer>false</organismsDiffer>
    <experiments>3</experiments>
</comment>
<comment type="interaction">
    <interactant intactId="EBI-1055254">
        <id>Q8WXH2</id>
    </interactant>
    <interactant intactId="EBI-304185">
        <id>P61978</id>
        <label>HNRNPK</label>
    </interactant>
    <organismsDiffer>false</organismsDiffer>
    <experiments>3</experiments>
</comment>
<comment type="interaction">
    <interactant intactId="EBI-1055254">
        <id>Q8WXH2</id>
    </interactant>
    <interactant intactId="EBI-351143">
        <id>Q00839-2</id>
        <label>HNRNPU</label>
    </interactant>
    <organismsDiffer>false</organismsDiffer>
    <experiments>3</experiments>
</comment>
<comment type="interaction">
    <interactant intactId="EBI-1055254">
        <id>Q8WXH2</id>
    </interactant>
    <interactant intactId="EBI-3957665">
        <id>Q96LI6</id>
        <label>HSFY2</label>
    </interactant>
    <organismsDiffer>false</organismsDiffer>
    <experiments>3</experiments>
</comment>
<comment type="interaction">
    <interactant intactId="EBI-1055254">
        <id>Q8WXH2</id>
    </interactant>
    <interactant intactId="EBI-12141931">
        <id>Q8NDH6-2</id>
        <label>ICA1L</label>
    </interactant>
    <organismsDiffer>false</organismsDiffer>
    <experiments>3</experiments>
</comment>
<comment type="interaction">
    <interactant intactId="EBI-1055254">
        <id>Q8WXH2</id>
    </interactant>
    <interactant intactId="EBI-25847993">
        <id>O14920-3</id>
        <label>IKBKB</label>
    </interactant>
    <organismsDiffer>false</organismsDiffer>
    <experiments>3</experiments>
</comment>
<comment type="interaction">
    <interactant intactId="EBI-1055254">
        <id>Q8WXH2</id>
    </interactant>
    <interactant intactId="EBI-3940749">
        <id>Q8N6P7</id>
        <label>IL22RA1</label>
    </interactant>
    <organismsDiffer>false</organismsDiffer>
    <experiments>3</experiments>
</comment>
<comment type="interaction">
    <interactant intactId="EBI-1055254">
        <id>Q8WXH2</id>
    </interactant>
    <interactant intactId="EBI-10220600">
        <id>Q8NA54</id>
        <label>IQUB</label>
    </interactant>
    <organismsDiffer>false</organismsDiffer>
    <experiments>3</experiments>
</comment>
<comment type="interaction">
    <interactant intactId="EBI-1055254">
        <id>Q8WXH2</id>
    </interactant>
    <interactant intactId="EBI-6672198">
        <id>Q96J02-2</id>
        <label>ITCH</label>
    </interactant>
    <organismsDiffer>false</organismsDiffer>
    <experiments>3</experiments>
</comment>
<comment type="interaction">
    <interactant intactId="EBI-1055254">
        <id>Q8WXH2</id>
    </interactant>
    <interactant intactId="EBI-739493">
        <id>Q6ZU52</id>
        <label>KIAA0408</label>
    </interactant>
    <organismsDiffer>false</organismsDiffer>
    <experiments>3</experiments>
</comment>
<comment type="interaction">
    <interactant intactId="EBI-1055254">
        <id>Q8WXH2</id>
    </interactant>
    <interactant intactId="EBI-10188326">
        <id>Q5T5P2-6</id>
        <label>KIAA1217</label>
    </interactant>
    <organismsDiffer>false</organismsDiffer>
    <experiments>3</experiments>
</comment>
<comment type="interaction">
    <interactant intactId="EBI-1055254">
        <id>Q8WXH2</id>
    </interactant>
    <interactant intactId="EBI-742756">
        <id>P08727</id>
        <label>KRT19</label>
    </interactant>
    <organismsDiffer>false</organismsDiffer>
    <experiments>3</experiments>
</comment>
<comment type="interaction">
    <interactant intactId="EBI-1055254">
        <id>Q8WXH2</id>
    </interactant>
    <interactant intactId="EBI-10171774">
        <id>P60410</id>
        <label>KRTAP10-8</label>
    </interactant>
    <organismsDiffer>false</organismsDiffer>
    <experiments>3</experiments>
</comment>
<comment type="interaction">
    <interactant intactId="EBI-1055254">
        <id>Q8WXH2</id>
    </interactant>
    <interactant intactId="EBI-739546">
        <id>Q96PV6</id>
        <label>LENG8</label>
    </interactant>
    <organismsDiffer>false</organismsDiffer>
    <experiments>3</experiments>
</comment>
<comment type="interaction">
    <interactant intactId="EBI-1055254">
        <id>Q8WXH2</id>
    </interactant>
    <interactant intactId="EBI-9088829">
        <id>Q6DKI2</id>
        <label>LGALS9C</label>
    </interactant>
    <organismsDiffer>false</organismsDiffer>
    <experiments>3</experiments>
</comment>
<comment type="interaction">
    <interactant intactId="EBI-1055254">
        <id>Q8WXH2</id>
    </interactant>
    <interactant intactId="EBI-10694501">
        <id>Q8N485</id>
        <label>LIX1</label>
    </interactant>
    <organismsDiffer>false</organismsDiffer>
    <experiments>3</experiments>
</comment>
<comment type="interaction">
    <interactant intactId="EBI-1055254">
        <id>Q8WXH2</id>
    </interactant>
    <interactant intactId="EBI-739832">
        <id>Q8TBB1</id>
        <label>LNX1</label>
    </interactant>
    <organismsDiffer>false</organismsDiffer>
    <experiments>3</experiments>
</comment>
<comment type="interaction">
    <interactant intactId="EBI-1055254">
        <id>Q8WXH2</id>
    </interactant>
    <interactant intactId="EBI-2510853">
        <id>Q1L5Z9</id>
        <label>LONRF2</label>
    </interactant>
    <organismsDiffer>false</organismsDiffer>
    <experiments>3</experiments>
</comment>
<comment type="interaction">
    <interactant intactId="EBI-1055254">
        <id>Q8WXH2</id>
    </interactant>
    <interactant intactId="EBI-5278370">
        <id>Q14693</id>
        <label>LPIN1</label>
    </interactant>
    <organismsDiffer>false</organismsDiffer>
    <experiments>3</experiments>
</comment>
<comment type="interaction">
    <interactant intactId="EBI-1055254">
        <id>Q8WXH2</id>
    </interactant>
    <interactant intactId="EBI-19133880">
        <id>Q9BX40-2</id>
        <label>LSM14B</label>
    </interactant>
    <organismsDiffer>false</organismsDiffer>
    <experiments>3</experiments>
</comment>
<comment type="interaction">
    <interactant intactId="EBI-1055254">
        <id>Q8WXH2</id>
    </interactant>
    <interactant intactId="EBI-5774346">
        <id>Q8WZA0</id>
        <label>LZIC</label>
    </interactant>
    <organismsDiffer>false</organismsDiffer>
    <experiments>3</experiments>
</comment>
<comment type="interaction">
    <interactant intactId="EBI-1055254">
        <id>Q8WXH2</id>
    </interactant>
    <interactant intactId="EBI-21634885">
        <id>O15480</id>
        <label>MAGEB3</label>
    </interactant>
    <organismsDiffer>false</organismsDiffer>
    <experiments>3</experiments>
</comment>
<comment type="interaction">
    <interactant intactId="EBI-1055254">
        <id>Q8WXH2</id>
    </interactant>
    <interactant intactId="EBI-2341554">
        <id>Q8NA82</id>
        <label>MARCHF10</label>
    </interactant>
    <organismsDiffer>false</organismsDiffer>
    <experiments>3</experiments>
</comment>
<comment type="interaction">
    <interactant intactId="EBI-1055254">
        <id>Q8WXH2</id>
    </interactant>
    <interactant intactId="EBI-2804835">
        <id>O94851</id>
        <label>MICAL2</label>
    </interactant>
    <organismsDiffer>false</organismsDiffer>
    <experiments>3</experiments>
</comment>
<comment type="interaction">
    <interactant intactId="EBI-1055254">
        <id>Q8WXH2</id>
    </interactant>
    <interactant intactId="EBI-21250407">
        <id>A4FUJ8</id>
        <label>MKL1</label>
    </interactant>
    <organismsDiffer>false</organismsDiffer>
    <experiments>3</experiments>
</comment>
<comment type="interaction">
    <interactant intactId="EBI-1055254">
        <id>Q8WXH2</id>
    </interactant>
    <interactant intactId="EBI-8475277">
        <id>Q15049</id>
        <label>MLC1</label>
    </interactant>
    <organismsDiffer>false</organismsDiffer>
    <experiments>3</experiments>
</comment>
<comment type="interaction">
    <interactant intactId="EBI-1055254">
        <id>Q8WXH2</id>
    </interactant>
    <interactant intactId="EBI-2512452">
        <id>Q8N594</id>
        <label>MPND</label>
    </interactant>
    <organismsDiffer>false</organismsDiffer>
    <experiments>3</experiments>
</comment>
<comment type="interaction">
    <interactant intactId="EBI-1055254">
        <id>Q8WXH2</id>
    </interactant>
    <interactant intactId="EBI-5325200">
        <id>Q13405</id>
        <label>MRPL49</label>
    </interactant>
    <organismsDiffer>false</organismsDiffer>
    <experiments>3</experiments>
</comment>
<comment type="interaction">
    <interactant intactId="EBI-1055254">
        <id>Q8WXH2</id>
    </interactant>
    <interactant intactId="EBI-9092052">
        <id>Q9Y3D2</id>
        <label>MSRB2</label>
    </interactant>
    <organismsDiffer>false</organismsDiffer>
    <experiments>3</experiments>
</comment>
<comment type="interaction">
    <interactant intactId="EBI-1055254">
        <id>Q8WXH2</id>
    </interactant>
    <interactant intactId="EBI-10698053">
        <id>Q9Y483-4</id>
        <label>MTF2</label>
    </interactant>
    <organismsDiffer>false</organismsDiffer>
    <experiments>3</experiments>
</comment>
<comment type="interaction">
    <interactant intactId="EBI-1055254">
        <id>Q8WXH2</id>
    </interactant>
    <interactant intactId="EBI-9088235">
        <id>A2RUH7</id>
        <label>MYBPHL</label>
    </interactant>
    <organismsDiffer>false</organismsDiffer>
    <experiments>3</experiments>
</comment>
<comment type="interaction">
    <interactant intactId="EBI-1055254">
        <id>Q8WXH2</id>
    </interactant>
    <interactant intactId="EBI-1390771">
        <id>Q96A32</id>
        <label>MYL11</label>
    </interactant>
    <organismsDiffer>false</organismsDiffer>
    <experiments>3</experiments>
</comment>
<comment type="interaction">
    <interactant intactId="EBI-1055254">
        <id>Q8WXH2</id>
    </interactant>
    <interactant intactId="EBI-3446748">
        <id>Q9NPC7</id>
        <label>MYNN</label>
    </interactant>
    <organismsDiffer>false</organismsDiffer>
    <experiments>3</experiments>
</comment>
<comment type="interaction">
    <interactant intactId="EBI-1055254">
        <id>Q8WXH2</id>
    </interactant>
    <interactant intactId="EBI-8645631">
        <id>Q99457</id>
        <label>NAP1L3</label>
    </interactant>
    <organismsDiffer>false</organismsDiffer>
    <experiments>3</experiments>
</comment>
<comment type="interaction">
    <interactant intactId="EBI-1055254">
        <id>Q8WXH2</id>
    </interactant>
    <interactant intactId="EBI-12054609">
        <id>Q13772-3</id>
        <label>NCOA4</label>
    </interactant>
    <organismsDiffer>false</organismsDiffer>
    <experiments>3</experiments>
</comment>
<comment type="interaction">
    <interactant intactId="EBI-1055254">
        <id>Q8WXH2</id>
    </interactant>
    <interactant intactId="EBI-719652">
        <id>O75251</id>
        <label>NDUFS7</label>
    </interactant>
    <organismsDiffer>false</organismsDiffer>
    <experiments>3</experiments>
</comment>
<comment type="interaction">
    <interactant intactId="EBI-1055254">
        <id>Q8WXH2</id>
    </interactant>
    <interactant intactId="EBI-740667">
        <id>P56597</id>
        <label>NME5</label>
    </interactant>
    <organismsDiffer>false</organismsDiffer>
    <experiments>3</experiments>
</comment>
<comment type="interaction">
    <interactant intactId="EBI-1055254">
        <id>Q8WXH2</id>
    </interactant>
    <interactant intactId="EBI-2514288">
        <id>Q9H6R4</id>
        <label>NOL6</label>
    </interactant>
    <organismsDiffer>false</organismsDiffer>
    <experiments>3</experiments>
</comment>
<comment type="interaction">
    <interactant intactId="EBI-1055254">
        <id>Q8WXH2</id>
    </interactant>
    <interactant intactId="EBI-25842707">
        <id>Q6X4W1-6</id>
        <label>NSMF</label>
    </interactant>
    <organismsDiffer>false</organismsDiffer>
    <experiments>3</experiments>
</comment>
<comment type="interaction">
    <interactant intactId="EBI-1055254">
        <id>Q8WXH2</id>
    </interactant>
    <interactant intactId="EBI-12744849">
        <id>Q9GZU5</id>
        <label>NYX</label>
    </interactant>
    <organismsDiffer>false</organismsDiffer>
    <experiments>3</experiments>
</comment>
<comment type="interaction">
    <interactant intactId="EBI-1055254">
        <id>Q8WXH2</id>
    </interactant>
    <interactant intactId="EBI-1058491">
        <id>Q96FW1</id>
        <label>OTUB1</label>
    </interactant>
    <organismsDiffer>false</organismsDiffer>
    <experiments>3</experiments>
</comment>
<comment type="interaction">
    <interactant intactId="EBI-1055254">
        <id>Q8WXH2</id>
    </interactant>
    <interactant intactId="EBI-25830200">
        <id>Q6GQQ9-2</id>
        <label>OTUD7B</label>
    </interactant>
    <organismsDiffer>false</organismsDiffer>
    <experiments>3</experiments>
</comment>
<comment type="interaction">
    <interactant intactId="EBI-1055254">
        <id>Q8WXH2</id>
    </interactant>
    <interactant intactId="EBI-740446">
        <id>P32242</id>
        <label>OTX1</label>
    </interactant>
    <organismsDiffer>false</organismsDiffer>
    <experiments>3</experiments>
</comment>
<comment type="interaction">
    <interactant intactId="EBI-1055254">
        <id>Q8WXH2</id>
    </interactant>
    <interactant intactId="EBI-1055272">
        <id>Q9H361</id>
        <label>PABPC3</label>
    </interactant>
    <organismsDiffer>false</organismsDiffer>
    <experiments>3</experiments>
</comment>
<comment type="interaction">
    <interactant intactId="EBI-1055254">
        <id>Q8WXH2</id>
    </interactant>
    <interactant intactId="EBI-10694433">
        <id>Q8N7B6-2</id>
        <label>PACRGL</label>
    </interactant>
    <organismsDiffer>false</organismsDiffer>
    <experiments>3</experiments>
</comment>
<comment type="interaction">
    <interactant intactId="EBI-1055254">
        <id>Q8WXH2</id>
    </interactant>
    <interactant intactId="EBI-17159452">
        <id>Q9NR21-5</id>
        <label>PARP11</label>
    </interactant>
    <organismsDiffer>false</organismsDiffer>
    <experiments>3</experiments>
</comment>
<comment type="interaction">
    <interactant intactId="EBI-1055254">
        <id>Q8WXH2</id>
    </interactant>
    <interactant intactId="EBI-11022007">
        <id>Q9HBE1-4</id>
        <label>PATZ1</label>
    </interactant>
    <organismsDiffer>false</organismsDiffer>
    <experiments>3</experiments>
</comment>
<comment type="interaction">
    <interactant intactId="EBI-1055254">
        <id>Q8WXH2</id>
    </interactant>
    <interactant intactId="EBI-741171">
        <id>Q96AL5</id>
        <label>PBX3</label>
    </interactant>
    <organismsDiffer>false</organismsDiffer>
    <experiments>3</experiments>
</comment>
<comment type="interaction">
    <interactant intactId="EBI-1055254">
        <id>Q8WXH2</id>
    </interactant>
    <interactant intactId="EBI-6309018">
        <id>Q9NV79</id>
        <label>PCMTD2</label>
    </interactant>
    <organismsDiffer>false</organismsDiffer>
    <experiments>3</experiments>
</comment>
<comment type="interaction">
    <interactant intactId="EBI-1055254">
        <id>Q8WXH2</id>
    </interactant>
    <interactant intactId="EBI-8059854">
        <id>Q16549</id>
        <label>PCSK7</label>
    </interactant>
    <organismsDiffer>false</organismsDiffer>
    <experiments>3</experiments>
</comment>
<comment type="interaction">
    <interactant intactId="EBI-1055254">
        <id>Q8WXH2</id>
    </interactant>
    <interactant intactId="EBI-751267">
        <id>Q96HC4</id>
        <label>PDLIM5</label>
    </interactant>
    <organismsDiffer>false</organismsDiffer>
    <experiments>3</experiments>
</comment>
<comment type="interaction">
    <interactant intactId="EBI-1055254">
        <id>Q8WXH2</id>
    </interactant>
    <interactant intactId="EBI-9087775">
        <id>O15530-4</id>
        <label>PDPK1</label>
    </interactant>
    <organismsDiffer>false</organismsDiffer>
    <experiments>3</experiments>
</comment>
<comment type="interaction">
    <interactant intactId="EBI-1055254">
        <id>Q8WXH2</id>
    </interactant>
    <interactant intactId="EBI-2557276">
        <id>O15534</id>
        <label>PER1</label>
    </interactant>
    <organismsDiffer>false</organismsDiffer>
    <experiments>3</experiments>
</comment>
<comment type="interaction">
    <interactant intactId="EBI-1055254">
        <id>Q8WXH2</id>
    </interactant>
    <interactant intactId="EBI-17183069">
        <id>Q96FX8</id>
        <label>PERP</label>
    </interactant>
    <organismsDiffer>false</organismsDiffer>
    <experiments>3</experiments>
</comment>
<comment type="interaction">
    <interactant intactId="EBI-1055254">
        <id>Q8WXH2</id>
    </interactant>
    <interactant intactId="EBI-2861380">
        <id>Q8TCD6</id>
        <label>PHOSPHO2</label>
    </interactant>
    <organismsDiffer>false</organismsDiffer>
    <experiments>3</experiments>
</comment>
<comment type="interaction">
    <interactant intactId="EBI-1055254">
        <id>Q8WXH2</id>
    </interactant>
    <interactant intactId="EBI-527417">
        <id>Q96J94</id>
        <label>PIWIL1</label>
    </interactant>
    <organismsDiffer>false</organismsDiffer>
    <experiments>3</experiments>
</comment>
<comment type="interaction">
    <interactant intactId="EBI-1055254">
        <id>Q8WXH2</id>
    </interactant>
    <interactant intactId="EBI-10694821">
        <id>Q6P1J6-2</id>
        <label>PLB1</label>
    </interactant>
    <organismsDiffer>false</organismsDiffer>
    <experiments>3</experiments>
</comment>
<comment type="interaction">
    <interactant intactId="EBI-1055254">
        <id>Q8WXH2</id>
    </interactant>
    <interactant intactId="EBI-2845982">
        <id>Q01453</id>
        <label>PMP22</label>
    </interactant>
    <organismsDiffer>false</organismsDiffer>
    <experiments>3</experiments>
</comment>
<comment type="interaction">
    <interactant intactId="EBI-1055254">
        <id>Q8WXH2</id>
    </interactant>
    <interactant intactId="EBI-712787">
        <id>Q9NRX1</id>
        <label>PNO1</label>
    </interactant>
    <organismsDiffer>false</organismsDiffer>
    <experiments>3</experiments>
</comment>
<comment type="interaction">
    <interactant intactId="EBI-1055254">
        <id>Q8WXH2</id>
    </interactant>
    <interactant intactId="EBI-78615">
        <id>Q07869</id>
        <label>PPARA</label>
    </interactant>
    <organismsDiffer>false</organismsDiffer>
    <experiments>3</experiments>
</comment>
<comment type="interaction">
    <interactant intactId="EBI-1055254">
        <id>Q8WXH2</id>
    </interactant>
    <interactant intactId="EBI-710402">
        <id>Q96I34</id>
        <label>PPP1R16A</label>
    </interactant>
    <organismsDiffer>false</organismsDiffer>
    <experiments>3</experiments>
</comment>
<comment type="interaction">
    <interactant intactId="EBI-1055254">
        <id>Q8WXH2</id>
    </interactant>
    <interactant intactId="EBI-25835994">
        <id>Q6ZMI0-5</id>
        <label>PPP1R21</label>
    </interactant>
    <organismsDiffer>false</organismsDiffer>
    <experiments>3</experiments>
</comment>
<comment type="interaction">
    <interactant intactId="EBI-1055254">
        <id>Q8WXH2</id>
    </interactant>
    <interactant intactId="EBI-712149">
        <id>Q06323</id>
        <label>PSME1</label>
    </interactant>
    <organismsDiffer>false</organismsDiffer>
    <experiments>3</experiments>
</comment>
<comment type="interaction">
    <interactant intactId="EBI-1055254">
        <id>Q8WXH2</id>
    </interactant>
    <interactant intactId="EBI-2876800">
        <id>Q14914</id>
        <label>PTGR1</label>
    </interactant>
    <organismsDiffer>false</organismsDiffer>
    <experiments>3</experiments>
</comment>
<comment type="interaction">
    <interactant intactId="EBI-1055254">
        <id>Q8WXH2</id>
    </interactant>
    <interactant intactId="EBI-722275">
        <id>Q15286</id>
        <label>RAB35</label>
    </interactant>
    <organismsDiffer>false</organismsDiffer>
    <experiments>3</experiments>
</comment>
<comment type="interaction">
    <interactant intactId="EBI-1055254">
        <id>Q8WXH2</id>
    </interactant>
    <interactant intactId="EBI-6552718">
        <id>P57729</id>
        <label>RAB38</label>
    </interactant>
    <organismsDiffer>false</organismsDiffer>
    <experiments>3</experiments>
</comment>
<comment type="interaction">
    <interactant intactId="EBI-1055254">
        <id>Q8WXH2</id>
    </interactant>
    <interactant intactId="EBI-11984839">
        <id>Q96QF0-7</id>
        <label>RAB3IP</label>
    </interactant>
    <organismsDiffer>false</organismsDiffer>
    <experiments>3</experiments>
</comment>
<comment type="interaction">
    <interactant intactId="EBI-1055254">
        <id>Q8WXH2</id>
    </interactant>
    <interactant intactId="EBI-438710">
        <id>Q9NS23-4</id>
        <label>RASSF1</label>
    </interactant>
    <organismsDiffer>false</organismsDiffer>
    <experiments>6</experiments>
</comment>
<comment type="interaction">
    <interactant intactId="EBI-1055254">
        <id>Q8WXH2</id>
    </interactant>
    <interactant intactId="EBI-960081">
        <id>P50749</id>
        <label>RASSF2</label>
    </interactant>
    <organismsDiffer>false</organismsDiffer>
    <experiments>3</experiments>
</comment>
<comment type="interaction">
    <interactant intactId="EBI-1055254">
        <id>Q8WXH2</id>
    </interactant>
    <interactant intactId="EBI-960502">
        <id>Q8WWW0-2</id>
        <label>RASSF5</label>
    </interactant>
    <organismsDiffer>false</organismsDiffer>
    <experiments>3</experiments>
</comment>
<comment type="interaction">
    <interactant intactId="EBI-1055254">
        <id>Q8WXH2</id>
    </interactant>
    <interactant intactId="EBI-10976415">
        <id>Q8NHQ8-2</id>
        <label>RASSF8</label>
    </interactant>
    <organismsDiffer>false</organismsDiffer>
    <experiments>3</experiments>
</comment>
<comment type="interaction">
    <interactant intactId="EBI-1055254">
        <id>Q8WXH2</id>
    </interactant>
    <interactant intactId="EBI-741332">
        <id>P57052</id>
        <label>RBM11</label>
    </interactant>
    <organismsDiffer>false</organismsDiffer>
    <experiments>3</experiments>
</comment>
<comment type="interaction">
    <interactant intactId="EBI-1055254">
        <id>Q8WXH2</id>
    </interactant>
    <interactant intactId="EBI-10964453">
        <id>Q8IUH3-3</id>
        <label>RBM45</label>
    </interactant>
    <organismsDiffer>false</organismsDiffer>
    <experiments>3</experiments>
</comment>
<comment type="interaction">
    <interactant intactId="EBI-1055254">
        <id>Q8WXH2</id>
    </interactant>
    <interactant intactId="EBI-21252376">
        <id>Q96PM5-4</id>
        <label>RCHY1</label>
    </interactant>
    <organismsDiffer>false</organismsDiffer>
    <experiments>3</experiments>
</comment>
<comment type="interaction">
    <interactant intactId="EBI-1055254">
        <id>Q8WXH2</id>
    </interactant>
    <interactant intactId="EBI-2367123">
        <id>O94955</id>
        <label>RHOBTB3</label>
    </interactant>
    <organismsDiffer>false</organismsDiffer>
    <experiments>3</experiments>
</comment>
<comment type="interaction">
    <interactant intactId="EBI-1055254">
        <id>Q8WXH2</id>
    </interactant>
    <interactant intactId="EBI-749039">
        <id>Q8WVD3</id>
        <label>RNF138</label>
    </interactant>
    <organismsDiffer>false</organismsDiffer>
    <experiments>3</experiments>
</comment>
<comment type="interaction">
    <interactant intactId="EBI-1055254">
        <id>Q8WXH2</id>
    </interactant>
    <interactant intactId="EBI-350569">
        <id>P46782</id>
        <label>RPS5</label>
    </interactant>
    <organismsDiffer>false</organismsDiffer>
    <experiments>3</experiments>
</comment>
<comment type="interaction">
    <interactant intactId="EBI-1055254">
        <id>Q8WXH2</id>
    </interactant>
    <interactant intactId="EBI-11528848">
        <id>Q8N6K7-2</id>
        <label>SAMD3</label>
    </interactant>
    <organismsDiffer>false</organismsDiffer>
    <experiments>3</experiments>
</comment>
<comment type="interaction">
    <interactant intactId="EBI-1055254">
        <id>Q8WXH2</id>
    </interactant>
    <interactant intactId="EBI-11959369">
        <id>Q8IZE3-2</id>
        <label>SCYL3</label>
    </interactant>
    <organismsDiffer>false</organismsDiffer>
    <experiments>3</experiments>
</comment>
<comment type="interaction">
    <interactant intactId="EBI-1055254">
        <id>Q8WXH2</id>
    </interactant>
    <interactant intactId="EBI-79819">
        <id>P60896</id>
        <label>SEM1</label>
    </interactant>
    <organismsDiffer>false</organismsDiffer>
    <experiments>3</experiments>
</comment>
<comment type="interaction">
    <interactant intactId="EBI-1055254">
        <id>Q8WXH2</id>
    </interactant>
    <interactant intactId="EBI-1051880">
        <id>Q12874</id>
        <label>SF3A3</label>
    </interactant>
    <organismsDiffer>false</organismsDiffer>
    <experiments>3</experiments>
</comment>
<comment type="interaction">
    <interactant intactId="EBI-1055254">
        <id>Q8WXH2</id>
    </interactant>
    <interactant intactId="EBI-2854879">
        <id>Q6FHJ7</id>
        <label>SFRP4</label>
    </interactant>
    <organismsDiffer>false</organismsDiffer>
    <experiments>3</experiments>
</comment>
<comment type="interaction">
    <interactant intactId="EBI-1055254">
        <id>Q8WXH2</id>
    </interactant>
    <interactant intactId="EBI-358545">
        <id>Q9GZS3</id>
        <label>SKIC8</label>
    </interactant>
    <organismsDiffer>false</organismsDiffer>
    <experiments>3</experiments>
</comment>
<comment type="interaction">
    <interactant intactId="EBI-1055254">
        <id>Q8WXH2</id>
    </interactant>
    <interactant intactId="EBI-21504521">
        <id>Q8NCS7</id>
        <label>SLC44A5</label>
    </interactant>
    <organismsDiffer>false</organismsDiffer>
    <experiments>3</experiments>
</comment>
<comment type="interaction">
    <interactant intactId="EBI-1055254">
        <id>Q8WXH2</id>
    </interactant>
    <interactant intactId="EBI-750559">
        <id>O95391</id>
        <label>SLU7</label>
    </interactant>
    <organismsDiffer>false</organismsDiffer>
    <experiments>3</experiments>
</comment>
<comment type="interaction">
    <interactant intactId="EBI-1055254">
        <id>Q8WXH2</id>
    </interactant>
    <interactant intactId="EBI-347161">
        <id>P84022</id>
        <label>SMAD3</label>
    </interactant>
    <organismsDiffer>false</organismsDiffer>
    <experiments>3</experiments>
</comment>
<comment type="interaction">
    <interactant intactId="EBI-1055254">
        <id>Q8WXH2</id>
    </interactant>
    <interactant intactId="EBI-358419">
        <id>Q12824</id>
        <label>SMARCB1</label>
    </interactant>
    <organismsDiffer>false</organismsDiffer>
    <experiments>3</experiments>
</comment>
<comment type="interaction">
    <interactant intactId="EBI-1055254">
        <id>Q8WXH2</id>
    </interactant>
    <interactant intactId="EBI-358489">
        <id>Q96GM5</id>
        <label>SMARCD1</label>
    </interactant>
    <organismsDiffer>false</organismsDiffer>
    <experiments>3</experiments>
</comment>
<comment type="interaction">
    <interactant intactId="EBI-1055254">
        <id>Q8WXH2</id>
    </interactant>
    <interactant intactId="EBI-632715">
        <id>Q13573</id>
        <label>SNW1</label>
    </interactant>
    <organismsDiffer>false</organismsDiffer>
    <experiments>3</experiments>
</comment>
<comment type="interaction">
    <interactant intactId="EBI-1055254">
        <id>Q8WXH2</id>
    </interactant>
    <interactant intactId="EBI-3942425">
        <id>Q8WXH5</id>
        <label>SOCS4</label>
    </interactant>
    <organismsDiffer>false</organismsDiffer>
    <experiments>3</experiments>
</comment>
<comment type="interaction">
    <interactant intactId="EBI-1055254">
        <id>Q8WXH2</id>
    </interactant>
    <interactant intactId="EBI-7067260">
        <id>Q8NHS9</id>
        <label>SPATA22</label>
    </interactant>
    <organismsDiffer>false</organismsDiffer>
    <experiments>3</experiments>
</comment>
<comment type="interaction">
    <interactant intactId="EBI-1055254">
        <id>Q8WXH2</id>
    </interactant>
    <interactant intactId="EBI-2510414">
        <id>Q8IUW3</id>
        <label>SPATA2L</label>
    </interactant>
    <organismsDiffer>false</organismsDiffer>
    <experiments>3</experiments>
</comment>
<comment type="interaction">
    <interactant intactId="EBI-1055254">
        <id>Q8WXH2</id>
    </interactant>
    <interactant intactId="EBI-5235340">
        <id>Q7Z699</id>
        <label>SPRED1</label>
    </interactant>
    <organismsDiffer>false</organismsDiffer>
    <experiments>3</experiments>
</comment>
<comment type="interaction">
    <interactant intactId="EBI-1055254">
        <id>Q8WXH2</id>
    </interactant>
    <interactant intactId="EBI-722621">
        <id>Q08170</id>
        <label>SRSF4</label>
    </interactant>
    <organismsDiffer>false</organismsDiffer>
    <experiments>3</experiments>
</comment>
<comment type="interaction">
    <interactant intactId="EBI-1055254">
        <id>Q8WXH2</id>
    </interactant>
    <interactant intactId="EBI-12035119">
        <id>O75177-5</id>
        <label>SS18L1</label>
    </interactant>
    <organismsDiffer>false</organismsDiffer>
    <experiments>3</experiments>
</comment>
<comment type="interaction">
    <interactant intactId="EBI-1055254">
        <id>Q8WXH2</id>
    </interactant>
    <interactant intactId="EBI-396676">
        <id>O95630</id>
        <label>STAMBP</label>
    </interactant>
    <organismsDiffer>false</organismsDiffer>
    <experiments>3</experiments>
</comment>
<comment type="interaction">
    <interactant intactId="EBI-1055254">
        <id>Q8WXH2</id>
    </interactant>
    <interactant intactId="EBI-992580">
        <id>Q13188</id>
        <label>STK3</label>
    </interactant>
    <organismsDiffer>false</organismsDiffer>
    <experiments>3</experiments>
</comment>
<comment type="interaction">
    <interactant intactId="EBI-1055254">
        <id>Q8WXH2</id>
    </interactant>
    <interactant intactId="EBI-25831443">
        <id>Q9BR01-2</id>
        <label>SULT4A1</label>
    </interactant>
    <organismsDiffer>false</organismsDiffer>
    <experiments>3</experiments>
</comment>
<comment type="interaction">
    <interactant intactId="EBI-1055254">
        <id>Q8WXH2</id>
    </interactant>
    <interactant intactId="EBI-717325">
        <id>Q9UHF0</id>
        <label>TAC3</label>
    </interactant>
    <organismsDiffer>false</organismsDiffer>
    <experiments>3</experiments>
</comment>
<comment type="interaction">
    <interactant intactId="EBI-1055254">
        <id>Q8WXH2</id>
    </interactant>
    <interactant intactId="EBI-745958">
        <id>Q5VWN6</id>
        <label>TASOR2</label>
    </interactant>
    <organismsDiffer>false</organismsDiffer>
    <experiments>3</experiments>
</comment>
<comment type="interaction">
    <interactant intactId="EBI-1055254">
        <id>Q8WXH2</id>
    </interactant>
    <interactant intactId="EBI-954089">
        <id>O15273</id>
        <label>TCAP</label>
    </interactant>
    <organismsDiffer>false</organismsDiffer>
    <experiments>3</experiments>
</comment>
<comment type="interaction">
    <interactant intactId="EBI-1055254">
        <id>Q8WXH2</id>
    </interactant>
    <interactant intactId="EBI-2557232">
        <id>P20061</id>
        <label>TCN1</label>
    </interactant>
    <organismsDiffer>false</organismsDiffer>
    <experiments>3</experiments>
</comment>
<comment type="interaction">
    <interactant intactId="EBI-1055254">
        <id>Q8WXH2</id>
    </interactant>
    <interactant intactId="EBI-9088037">
        <id>Q7Z403</id>
        <label>TMC6</label>
    </interactant>
    <organismsDiffer>false</organismsDiffer>
    <experiments>3</experiments>
</comment>
<comment type="interaction">
    <interactant intactId="EBI-1055254">
        <id>Q8WXH2</id>
    </interactant>
    <interactant intactId="EBI-998422">
        <id>P49755</id>
        <label>TMED10</label>
    </interactant>
    <organismsDiffer>false</organismsDiffer>
    <experiments>3</experiments>
</comment>
<comment type="interaction">
    <interactant intactId="EBI-1055254">
        <id>Q8WXH2</id>
    </interactant>
    <interactant intactId="EBI-25928249">
        <id>Q8N605</id>
        <label>TMEM135</label>
    </interactant>
    <organismsDiffer>false</organismsDiffer>
    <experiments>3</experiments>
</comment>
<comment type="interaction">
    <interactant intactId="EBI-1055254">
        <id>Q8WXH2</id>
    </interactant>
    <interactant intactId="EBI-17681263">
        <id>Q96I45</id>
        <label>TMEM141</label>
    </interactant>
    <organismsDiffer>false</organismsDiffer>
    <experiments>3</experiments>
</comment>
<comment type="interaction">
    <interactant intactId="EBI-1055254">
        <id>Q8WXH2</id>
    </interactant>
    <interactant intactId="EBI-9089409">
        <id>Q96B77</id>
        <label>TMEM186</label>
    </interactant>
    <organismsDiffer>false</organismsDiffer>
    <experiments>3</experiments>
</comment>
<comment type="interaction">
    <interactant intactId="EBI-1055254">
        <id>Q8WXH2</id>
    </interactant>
    <interactant intactId="EBI-11425701">
        <id>Q9BVT8</id>
        <label>TMUB1</label>
    </interactant>
    <organismsDiffer>false</organismsDiffer>
    <experiments>3</experiments>
</comment>
<comment type="interaction">
    <interactant intactId="EBI-1055254">
        <id>Q8WXH2</id>
    </interactant>
    <interactant intactId="EBI-25831574">
        <id>Q71RG4-4</id>
        <label>TMUB2</label>
    </interactant>
    <organismsDiffer>false</organismsDiffer>
    <experiments>3</experiments>
</comment>
<comment type="interaction">
    <interactant intactId="EBI-1055254">
        <id>Q8WXH2</id>
    </interactant>
    <interactant intactId="EBI-2505861">
        <id>Q13829</id>
        <label>TNFAIP1</label>
    </interactant>
    <organismsDiffer>false</organismsDiffer>
    <experiments>3</experiments>
</comment>
<comment type="interaction">
    <interactant intactId="EBI-1055254">
        <id>Q8WXH2</id>
    </interactant>
    <interactant intactId="EBI-1756205">
        <id>Q9BWF2</id>
        <label>TRAIP</label>
    </interactant>
    <organismsDiffer>false</organismsDiffer>
    <experiments>3</experiments>
</comment>
<comment type="interaction">
    <interactant intactId="EBI-1055254">
        <id>Q8WXH2</id>
    </interactant>
    <interactant intactId="EBI-16746122">
        <id>Q9NSU2-1</id>
        <label>TREX1</label>
    </interactant>
    <organismsDiffer>false</organismsDiffer>
    <experiments>3</experiments>
</comment>
<comment type="interaction">
    <interactant intactId="EBI-1055254">
        <id>Q8WXH2</id>
    </interactant>
    <interactant intactId="EBI-948354">
        <id>Q6DKK2</id>
        <label>TTC19</label>
    </interactant>
    <organismsDiffer>false</organismsDiffer>
    <experiments>3</experiments>
</comment>
<comment type="interaction">
    <interactant intactId="EBI-1055254">
        <id>Q8WXH2</id>
    </interactant>
    <interactant intactId="EBI-9088812">
        <id>Q5VYS8-5</id>
        <label>TUT7</label>
    </interactant>
    <organismsDiffer>false</organismsDiffer>
    <experiments>3</experiments>
</comment>
<comment type="interaction">
    <interactant intactId="EBI-1055254">
        <id>Q8WXH2</id>
    </interactant>
    <interactant intactId="EBI-594644">
        <id>P10599</id>
        <label>TXN</label>
    </interactant>
    <organismsDiffer>false</organismsDiffer>
    <experiments>3</experiments>
</comment>
<comment type="interaction">
    <interactant intactId="EBI-1055254">
        <id>Q8WXH2</id>
    </interactant>
    <interactant intactId="EBI-10180829">
        <id>Q7KZS0</id>
        <label>UBE2I</label>
    </interactant>
    <organismsDiffer>false</organismsDiffer>
    <experiments>3</experiments>
</comment>
<comment type="interaction">
    <interactant intactId="EBI-1055254">
        <id>Q8WXH2</id>
    </interactant>
    <interactant intactId="EBI-12295223">
        <id>Q8IYU4</id>
        <label>UBQLNL</label>
    </interactant>
    <organismsDiffer>false</organismsDiffer>
    <experiments>3</experiments>
</comment>
<comment type="interaction">
    <interactant intactId="EBI-1055254">
        <id>Q8WXH2</id>
    </interactant>
    <interactant intactId="EBI-2510389">
        <id>Q14694</id>
        <label>USP10</label>
    </interactant>
    <organismsDiffer>false</organismsDiffer>
    <experiments>3</experiments>
</comment>
<comment type="interaction">
    <interactant intactId="EBI-1055254">
        <id>Q8WXH2</id>
    </interactant>
    <interactant intactId="EBI-16813369">
        <id>Q9Y5T5-2</id>
        <label>USP16</label>
    </interactant>
    <organismsDiffer>false</organismsDiffer>
    <experiments>3</experiments>
</comment>
<comment type="interaction">
    <interactant intactId="EBI-1055254">
        <id>Q8WXH2</id>
    </interactant>
    <interactant intactId="EBI-10696113">
        <id>O75604-3</id>
        <label>USP2</label>
    </interactant>
    <organismsDiffer>false</organismsDiffer>
    <experiments>3</experiments>
</comment>
<comment type="interaction">
    <interactant intactId="EBI-1055254">
        <id>Q8WXH2</id>
    </interactant>
    <interactant intactId="EBI-473284">
        <id>Q9BVJ6</id>
        <label>UTP14A</label>
    </interactant>
    <organismsDiffer>false</organismsDiffer>
    <experiments>3</experiments>
</comment>
<comment type="interaction">
    <interactant intactId="EBI-1055254">
        <id>Q8WXH2</id>
    </interactant>
    <interactant intactId="EBI-12157263">
        <id>P40337-2</id>
        <label>VHL</label>
    </interactant>
    <organismsDiffer>false</organismsDiffer>
    <experiments>3</experiments>
</comment>
<comment type="interaction">
    <interactant intactId="EBI-1055254">
        <id>Q8WXH2</id>
    </interactant>
    <interactant intactId="EBI-2850578">
        <id>Q8NEZ2</id>
        <label>VPS37A</label>
    </interactant>
    <organismsDiffer>false</organismsDiffer>
    <experiments>3</experiments>
</comment>
<comment type="interaction">
    <interactant intactId="EBI-1055254">
        <id>Q8WXH2</id>
    </interactant>
    <interactant intactId="EBI-6427899">
        <id>P58304</id>
        <label>VSX2</label>
    </interactant>
    <organismsDiffer>false</organismsDiffer>
    <experiments>3</experiments>
</comment>
<comment type="interaction">
    <interactant intactId="EBI-1055254">
        <id>Q8WXH2</id>
    </interactant>
    <interactant intactId="EBI-7705033">
        <id>Q9BRX9</id>
        <label>WDR83</label>
    </interactant>
    <organismsDiffer>false</organismsDiffer>
    <experiments>3</experiments>
</comment>
<comment type="interaction">
    <interactant intactId="EBI-1055254">
        <id>Q8WXH2</id>
    </interactant>
    <interactant intactId="EBI-12040603">
        <id>Q9NZC7-5</id>
        <label>WWOX</label>
    </interactant>
    <organismsDiffer>false</organismsDiffer>
    <experiments>3</experiments>
</comment>
<comment type="interaction">
    <interactant intactId="EBI-1055254">
        <id>Q8WXH2</id>
    </interactant>
    <interactant intactId="EBI-743923">
        <id>O00308</id>
        <label>WWP2</label>
    </interactant>
    <organismsDiffer>false</organismsDiffer>
    <experiments>3</experiments>
</comment>
<comment type="interaction">
    <interactant intactId="EBI-1055254">
        <id>Q8WXH2</id>
    </interactant>
    <interactant intactId="EBI-7850136">
        <id>Q9Y548</id>
        <label>YIPF1</label>
    </interactant>
    <organismsDiffer>false</organismsDiffer>
    <experiments>3</experiments>
</comment>
<comment type="interaction">
    <interactant intactId="EBI-1055254">
        <id>Q8WXH2</id>
    </interactant>
    <interactant intactId="EBI-739899">
        <id>P24278</id>
        <label>ZBTB25</label>
    </interactant>
    <organismsDiffer>false</organismsDiffer>
    <experiments>3</experiments>
</comment>
<comment type="interaction">
    <interactant intactId="EBI-1055254">
        <id>Q8WXH2</id>
    </interactant>
    <interactant intactId="EBI-14104088">
        <id>Q53FD0-2</id>
        <label>ZC2HC1C</label>
    </interactant>
    <organismsDiffer>false</organismsDiffer>
    <experiments>3</experiments>
</comment>
<comment type="interaction">
    <interactant intactId="EBI-1055254">
        <id>Q8WXH2</id>
    </interactant>
    <interactant intactId="EBI-374248">
        <id>P26651</id>
        <label>ZFP36</label>
    </interactant>
    <organismsDiffer>false</organismsDiffer>
    <experiments>3</experiments>
</comment>
<comment type="interaction">
    <interactant intactId="EBI-1055254">
        <id>Q8WXH2</id>
    </interactant>
    <interactant intactId="EBI-1965777">
        <id>Q9BRR0</id>
        <label>ZKSCAN3</label>
    </interactant>
    <organismsDiffer>false</organismsDiffer>
    <experiments>3</experiments>
</comment>
<comment type="interaction">
    <interactant intactId="EBI-1055254">
        <id>Q8WXH2</id>
    </interactant>
    <interactant intactId="EBI-12884200">
        <id>P17023</id>
        <label>ZNF19</label>
    </interactant>
    <organismsDiffer>false</organismsDiffer>
    <experiments>3</experiments>
</comment>
<comment type="interaction">
    <interactant intactId="EBI-1055254">
        <id>Q8WXH2</id>
    </interactant>
    <interactant intactId="EBI-717634">
        <id>P17024</id>
        <label>ZNF20</label>
    </interactant>
    <organismsDiffer>false</organismsDiffer>
    <experiments>3</experiments>
</comment>
<comment type="interaction">
    <interactant intactId="EBI-1055254">
        <id>Q8WXH2</id>
    </interactant>
    <interactant intactId="EBI-749023">
        <id>Q9UNY5</id>
        <label>ZNF232</label>
    </interactant>
    <organismsDiffer>false</organismsDiffer>
    <experiments>3</experiments>
</comment>
<comment type="interaction">
    <interactant intactId="EBI-1055254">
        <id>Q8WXH2</id>
    </interactant>
    <interactant intactId="EBI-12988373">
        <id>Q9NR11-2</id>
        <label>ZNF302</label>
    </interactant>
    <organismsDiffer>false</organismsDiffer>
    <experiments>3</experiments>
</comment>
<comment type="interaction">
    <interactant intactId="EBI-1055254">
        <id>Q8WXH2</id>
    </interactant>
    <interactant intactId="EBI-8489702">
        <id>Q9C0F3</id>
        <label>ZNF436</label>
    </interactant>
    <organismsDiffer>false</organismsDiffer>
    <experiments>3</experiments>
</comment>
<comment type="interaction">
    <interactant intactId="EBI-1055254">
        <id>Q8WXH2</id>
    </interactant>
    <interactant intactId="EBI-18234077">
        <id>O60304</id>
        <label>ZNF500</label>
    </interactant>
    <organismsDiffer>false</organismsDiffer>
    <experiments>3</experiments>
</comment>
<comment type="interaction">
    <interactant intactId="EBI-1055254">
        <id>Q8WXH2</id>
    </interactant>
    <interactant intactId="EBI-745520">
        <id>Q9P0T4</id>
        <label>ZNF581</label>
    </interactant>
    <organismsDiffer>false</organismsDiffer>
    <experiments>3</experiments>
</comment>
<comment type="interaction">
    <interactant intactId="EBI-1055254">
        <id>Q8WXH2</id>
    </interactant>
    <interactant intactId="EBI-10251462">
        <id>Q6NX45</id>
        <label>ZNF774</label>
    </interactant>
    <organismsDiffer>false</organismsDiffer>
    <experiments>3</experiments>
</comment>
<comment type="interaction">
    <interactant intactId="EBI-1055254">
        <id>Q8WXH2</id>
    </interactant>
    <interactant intactId="EBI-751531">
        <id>O15535</id>
        <label>ZSCAN9</label>
    </interactant>
    <organismsDiffer>false</organismsDiffer>
    <experiments>3</experiments>
</comment>
<comment type="interaction">
    <interactant intactId="EBI-1055254">
        <id>Q8WXH2</id>
    </interactant>
    <interactant intactId="EBI-10259496">
        <id>Q86V28</id>
    </interactant>
    <organismsDiffer>false</organismsDiffer>
    <experiments>3</experiments>
</comment>
<comment type="interaction">
    <interactant intactId="EBI-1055254">
        <id>Q8WXH2</id>
    </interactant>
    <interactant intactId="EBI-10976904">
        <id>Q96E88</id>
    </interactant>
    <organismsDiffer>false</organismsDiffer>
    <experiments>3</experiments>
</comment>
<comment type="interaction">
    <interactant intactId="EBI-1055254">
        <id>Q8WXH2</id>
    </interactant>
    <interactant intactId="EBI-22013570">
        <id>Q9BQ29</id>
    </interactant>
    <organismsDiffer>false</organismsDiffer>
    <experiments>3</experiments>
</comment>
<comment type="subcellular location">
    <subcellularLocation>
        <location evidence="1">Cell membrane</location>
        <topology evidence="1">Peripheral membrane protein</topology>
    </subcellularLocation>
    <subcellularLocation>
        <location evidence="1">Endoplasmic reticulum membrane</location>
        <topology evidence="1">Single-pass type IV membrane protein</topology>
    </subcellularLocation>
    <text evidence="1">Localized predominantly on the plasma membrane. The transmembrane domain is anchored in endoplasmic reticulum membrane, while the N-terminal part associates with the plasma membrane (By similarity).</text>
</comment>
<comment type="alternative products">
    <event type="alternative splicing"/>
    <isoform>
        <id>Q8WXH2-1</id>
        <name>1</name>
        <sequence type="displayed"/>
    </isoform>
    <isoform>
        <id>Q8WXH2-2</id>
        <name>2</name>
        <sequence type="described" ref="VSP_002787 VSP_002788"/>
    </isoform>
    <text>Additional isoforms seem to exist.</text>
</comment>
<comment type="tissue specificity">
    <text evidence="5">Specifically expressed in brain.</text>
</comment>
<comment type="domain">
    <text evidence="1">The MORN (membrane occupation and recognition nexus) repeats contribute to the plasma membrane binding, possibly by interacting with phospholipids.</text>
</comment>
<comment type="polymorphism">
    <text>Isoform 2 length of the poly-Ala region is variable (6 to 27 CTG/CAG triplets) in the normal population and may be expanded (41 to 58 CTG/CAG triplets) in patients suffering from Huntington disease-like type 2.</text>
</comment>
<comment type="disease" evidence="6 7">
    <disease id="DI-01756">
        <name>Huntington disease-like 2</name>
        <acronym>HDL2</acronym>
        <description>Huntington disease (HD) is a neurodegenerative disorder resulting primarily from the loss of medium spiny projection neurons in the striatum, especially in the caudate nucleus, and, to a lesser extent, atrophy of mesencephalic and cortical structures. The typical clinical picture of HD combines familial adult onset chorea and subcortical dementia that usually begin during the fourth decade of life.</description>
        <dbReference type="MIM" id="606438"/>
    </disease>
    <text>The disease is caused by variants affecting the gene represented in this entry.</text>
</comment>
<comment type="similarity">
    <text evidence="9">Belongs to the junctophilin family.</text>
</comment>
<name>JPH3_HUMAN</name>
<accession>Q8WXH2</accession>
<accession>D3DUN2</accession>
<accession>Q8N471</accession>
<accession>Q9HDC3</accession>
<accession>Q9HDC4</accession>
<organism>
    <name type="scientific">Homo sapiens</name>
    <name type="common">Human</name>
    <dbReference type="NCBI Taxonomy" id="9606"/>
    <lineage>
        <taxon>Eukaryota</taxon>
        <taxon>Metazoa</taxon>
        <taxon>Chordata</taxon>
        <taxon>Craniata</taxon>
        <taxon>Vertebrata</taxon>
        <taxon>Euteleostomi</taxon>
        <taxon>Mammalia</taxon>
        <taxon>Eutheria</taxon>
        <taxon>Euarchontoglires</taxon>
        <taxon>Primates</taxon>
        <taxon>Haplorrhini</taxon>
        <taxon>Catarrhini</taxon>
        <taxon>Hominidae</taxon>
        <taxon>Homo</taxon>
    </lineage>
</organism>